<feature type="chain" id="PRO_0000409251" description="Pheromone-regulated membrane protein 10">
    <location>
        <begin position="1"/>
        <end position="1105"/>
    </location>
</feature>
<feature type="transmembrane region" description="Helical" evidence="1">
    <location>
        <begin position="782"/>
        <end position="802"/>
    </location>
</feature>
<feature type="transmembrane region" description="Helical" evidence="1">
    <location>
        <begin position="809"/>
        <end position="829"/>
    </location>
</feature>
<feature type="transmembrane region" description="Helical" evidence="1">
    <location>
        <begin position="835"/>
        <end position="855"/>
    </location>
</feature>
<feature type="transmembrane region" description="Helical" evidence="1">
    <location>
        <begin position="860"/>
        <end position="880"/>
    </location>
</feature>
<feature type="transmembrane region" description="Helical" evidence="1">
    <location>
        <begin position="903"/>
        <end position="923"/>
    </location>
</feature>
<feature type="transmembrane region" description="Helical" evidence="1">
    <location>
        <begin position="938"/>
        <end position="958"/>
    </location>
</feature>
<feature type="transmembrane region" description="Helical" evidence="1">
    <location>
        <begin position="963"/>
        <end position="983"/>
    </location>
</feature>
<feature type="transmembrane region" description="Helical" evidence="1">
    <location>
        <begin position="986"/>
        <end position="1006"/>
    </location>
</feature>
<feature type="transmembrane region" description="Helical" evidence="1">
    <location>
        <begin position="1015"/>
        <end position="1035"/>
    </location>
</feature>
<feature type="transmembrane region" description="Helical" evidence="1">
    <location>
        <begin position="1075"/>
        <end position="1095"/>
    </location>
</feature>
<feature type="region of interest" description="Disordered" evidence="2">
    <location>
        <begin position="1"/>
        <end position="22"/>
    </location>
</feature>
<feature type="region of interest" description="Disordered" evidence="2">
    <location>
        <begin position="36"/>
        <end position="55"/>
    </location>
</feature>
<feature type="region of interest" description="Disordered" evidence="2">
    <location>
        <begin position="65"/>
        <end position="123"/>
    </location>
</feature>
<feature type="region of interest" description="Disordered" evidence="2">
    <location>
        <begin position="151"/>
        <end position="278"/>
    </location>
</feature>
<feature type="region of interest" description="Disordered" evidence="2">
    <location>
        <begin position="385"/>
        <end position="473"/>
    </location>
</feature>
<feature type="region of interest" description="Disordered" evidence="2">
    <location>
        <begin position="520"/>
        <end position="656"/>
    </location>
</feature>
<feature type="compositionally biased region" description="Polar residues" evidence="2">
    <location>
        <begin position="1"/>
        <end position="11"/>
    </location>
</feature>
<feature type="compositionally biased region" description="Low complexity" evidence="2">
    <location>
        <begin position="67"/>
        <end position="82"/>
    </location>
</feature>
<feature type="compositionally biased region" description="Polar residues" evidence="2">
    <location>
        <begin position="85"/>
        <end position="106"/>
    </location>
</feature>
<feature type="compositionally biased region" description="Acidic residues" evidence="2">
    <location>
        <begin position="162"/>
        <end position="178"/>
    </location>
</feature>
<feature type="compositionally biased region" description="Polar residues" evidence="2">
    <location>
        <begin position="185"/>
        <end position="197"/>
    </location>
</feature>
<feature type="compositionally biased region" description="Acidic residues" evidence="2">
    <location>
        <begin position="198"/>
        <end position="210"/>
    </location>
</feature>
<feature type="compositionally biased region" description="Polar residues" evidence="2">
    <location>
        <begin position="390"/>
        <end position="413"/>
    </location>
</feature>
<feature type="compositionally biased region" description="Low complexity" evidence="2">
    <location>
        <begin position="417"/>
        <end position="439"/>
    </location>
</feature>
<feature type="compositionally biased region" description="Basic and acidic residues" evidence="2">
    <location>
        <begin position="446"/>
        <end position="459"/>
    </location>
</feature>
<feature type="compositionally biased region" description="Polar residues" evidence="2">
    <location>
        <begin position="520"/>
        <end position="539"/>
    </location>
</feature>
<feature type="compositionally biased region" description="Polar residues" evidence="2">
    <location>
        <begin position="592"/>
        <end position="606"/>
    </location>
</feature>
<feature type="compositionally biased region" description="Polar residues" evidence="2">
    <location>
        <begin position="624"/>
        <end position="633"/>
    </location>
</feature>
<sequence length="1105" mass="120738">MSDNRPTYDTSSSDEEPSNHFHIQLPQRQLNLQEIRKQNHKKHEKPTIAKQTASNLAKAKKITTGSNHKFGNSINNNNNNANKHLGSSSAGTNRRSLISPTSSTHVSSDDDDDDDDNAAFYGDKLNDNKKLNVFADTKNNLSHFQFNADGIKPKSLHGQGDDSSDDDGNNLDEVEDETHSDFAVLNQNHPPQQYYETDSSDEDEEDDDEVPQTVHKTYSNASSGRSSRLSRKKSMSETTDTRAPIPPTGRRSTNSNHSRESSGRRSTSSGNINSGGGLKGILRKMSLVDSTPVDSTNQDISHSDTFLGRVLNFGTNQGLSGGGLAPGASRVIREEDEGEWNLDEERRVGFAAHENDRDAFEMQPLNYEDLSEEAKQLIQQHVPGAGASNLDHSQQSSAAPSTEITPSQSPNQHLLNEKSNNNENNQQSTTVESSSSTSSPGEDEELARRRASEERKKAENPFYTPNPDLFLRGTNADNQELHQAPNDFLHDMDGDYIAPPKQVQAGVLSSLLRLYQNPQEQKSASSLSRVSTGTSGTALSSFDDSYDSDDYKDSKSSSNVDLQHKLKSGIKGGSKAMFNKAANKLKHHSHTRTNTVETQGSSNSEEFSNDKDEFSNGYDDDNKMNANLPSFQNARPKMPKKKTTEPVQKLKKLRHKQRAERLRITVHIADILQRQRFIMNMCRALMLFGAPTHRLEEYMVMTSRVLEIDGQFIYFPGCMLVSFGDAATRTSEVHLVRCAQGINLSKLADTHKIYKAVIHDLIGVEDASKKLDDLLKSKSRYPPWLCVLFYGLGSLAVTPFAFEGGWLDLPISFGVGLCVGYLQFYVSSISNLYSSVFEVSAAIVVAFIARGIGSIKGGDLFCFSAIAQGSLAIILPGYIILCGSLELQSRNLVAGAVRMFYAVIYSLFLGFGITLGAALYGWIDHNATSANSCASGHAIDEKWRILFVPMFALCLGLINQARWSQVPIMIVIAGIGYIGSFFAGKHFSTVTEFTACIGAFIVGVLGNLYSRIWKGMAVSAMLPAIFVQVPSGIASKSSLISGLNTADQITNKSSSNNGGTVTNDASSLSFGATMVEVSIGISVGLFAAALIIYPFGKKRTGLFAL</sequence>
<protein>
    <recommendedName>
        <fullName>Pheromone-regulated membrane protein 10</fullName>
    </recommendedName>
</protein>
<reference key="1">
    <citation type="journal article" date="2009" name="Nature">
        <title>Evolution of pathogenicity and sexual reproduction in eight Candida genomes.</title>
        <authorList>
            <person name="Butler G."/>
            <person name="Rasmussen M.D."/>
            <person name="Lin M.F."/>
            <person name="Santos M.A.S."/>
            <person name="Sakthikumar S."/>
            <person name="Munro C.A."/>
            <person name="Rheinbay E."/>
            <person name="Grabherr M."/>
            <person name="Forche A."/>
            <person name="Reedy J.L."/>
            <person name="Agrafioti I."/>
            <person name="Arnaud M.B."/>
            <person name="Bates S."/>
            <person name="Brown A.J.P."/>
            <person name="Brunke S."/>
            <person name="Costanzo M.C."/>
            <person name="Fitzpatrick D.A."/>
            <person name="de Groot P.W.J."/>
            <person name="Harris D."/>
            <person name="Hoyer L.L."/>
            <person name="Hube B."/>
            <person name="Klis F.M."/>
            <person name="Kodira C."/>
            <person name="Lennard N."/>
            <person name="Logue M.E."/>
            <person name="Martin R."/>
            <person name="Neiman A.M."/>
            <person name="Nikolaou E."/>
            <person name="Quail M.A."/>
            <person name="Quinn J."/>
            <person name="Santos M.C."/>
            <person name="Schmitzberger F.F."/>
            <person name="Sherlock G."/>
            <person name="Shah P."/>
            <person name="Silverstein K.A.T."/>
            <person name="Skrzypek M.S."/>
            <person name="Soll D."/>
            <person name="Staggs R."/>
            <person name="Stansfield I."/>
            <person name="Stumpf M.P.H."/>
            <person name="Sudbery P.E."/>
            <person name="Srikantha T."/>
            <person name="Zeng Q."/>
            <person name="Berman J."/>
            <person name="Berriman M."/>
            <person name="Heitman J."/>
            <person name="Gow N.A.R."/>
            <person name="Lorenz M.C."/>
            <person name="Birren B.W."/>
            <person name="Kellis M."/>
            <person name="Cuomo C.A."/>
        </authorList>
    </citation>
    <scope>NUCLEOTIDE SEQUENCE [LARGE SCALE GENOMIC DNA]</scope>
    <source>
        <strain>WO-1</strain>
    </source>
</reference>
<evidence type="ECO:0000255" key="1"/>
<evidence type="ECO:0000256" key="2">
    <source>
        <dbReference type="SAM" id="MobiDB-lite"/>
    </source>
</evidence>
<evidence type="ECO:0000305" key="3"/>
<proteinExistence type="inferred from homology"/>
<gene>
    <name type="ORF">CAWG_05545</name>
</gene>
<keyword id="KW-0472">Membrane</keyword>
<keyword id="KW-0812">Transmembrane</keyword>
<keyword id="KW-1133">Transmembrane helix</keyword>
<dbReference type="EMBL" id="CM000313">
    <property type="protein sequence ID" value="EEQ46991.1"/>
    <property type="molecule type" value="Genomic_DNA"/>
</dbReference>
<dbReference type="TCDB" id="2.A.79.1.10">
    <property type="family name" value="the threonine/serine exporter (thre) family"/>
</dbReference>
<dbReference type="PaxDb" id="5476-C4YTQ0"/>
<dbReference type="VEuPathDB" id="FungiDB:CAWG_05545"/>
<dbReference type="HOGENOM" id="CLU_007078_1_0_1"/>
<dbReference type="OMA" id="FVYFPGT"/>
<dbReference type="OrthoDB" id="24624at766764"/>
<dbReference type="Proteomes" id="UP000001429">
    <property type="component" value="Chromosome 7"/>
</dbReference>
<dbReference type="GO" id="GO:0016020">
    <property type="term" value="C:membrane"/>
    <property type="evidence" value="ECO:0007669"/>
    <property type="project" value="UniProtKB-SubCell"/>
</dbReference>
<dbReference type="GO" id="GO:0022857">
    <property type="term" value="F:transmembrane transporter activity"/>
    <property type="evidence" value="ECO:0007669"/>
    <property type="project" value="InterPro"/>
</dbReference>
<dbReference type="InterPro" id="IPR010619">
    <property type="entry name" value="ThrE-like_N"/>
</dbReference>
<dbReference type="InterPro" id="IPR051361">
    <property type="entry name" value="ThrE/Ser_Exporter"/>
</dbReference>
<dbReference type="PANTHER" id="PTHR31082">
    <property type="entry name" value="PHEROMONE-REGULATED MEMBRANE PROTEIN 10"/>
    <property type="match status" value="1"/>
</dbReference>
<dbReference type="PANTHER" id="PTHR31082:SF4">
    <property type="entry name" value="PHEROMONE-REGULATED MEMBRANE PROTEIN 10"/>
    <property type="match status" value="1"/>
</dbReference>
<dbReference type="Pfam" id="PF06738">
    <property type="entry name" value="ThrE"/>
    <property type="match status" value="1"/>
</dbReference>
<accession>C4YTQ0</accession>
<comment type="subcellular location">
    <subcellularLocation>
        <location>Membrane</location>
        <topology>Multi-pass membrane protein</topology>
    </subcellularLocation>
</comment>
<comment type="similarity">
    <text evidence="3">Belongs to the ThrE exporter (TC 2.A.79) family.</text>
</comment>
<name>PRM10_CANAW</name>
<organism>
    <name type="scientific">Candida albicans (strain WO-1)</name>
    <name type="common">Yeast</name>
    <dbReference type="NCBI Taxonomy" id="294748"/>
    <lineage>
        <taxon>Eukaryota</taxon>
        <taxon>Fungi</taxon>
        <taxon>Dikarya</taxon>
        <taxon>Ascomycota</taxon>
        <taxon>Saccharomycotina</taxon>
        <taxon>Pichiomycetes</taxon>
        <taxon>Debaryomycetaceae</taxon>
        <taxon>Candida/Lodderomyces clade</taxon>
        <taxon>Candida</taxon>
    </lineage>
</organism>